<accession>P92668</accession>
<reference key="1">
    <citation type="journal article" date="1997" name="Proc. Natl. Acad. Sci. U.S.A.">
        <title>The complete mitochondrial genome of the wallaroo (Macropus robustus) and the phylogenetic relationship among Monotremata, Marsupialia, and Eutheria.</title>
        <authorList>
            <person name="Janke A."/>
            <person name="Xu X."/>
            <person name="Arnason U."/>
        </authorList>
    </citation>
    <scope>NUCLEOTIDE SEQUENCE [GENOMIC DNA]</scope>
</reference>
<geneLocation type="mitochondrion"/>
<proteinExistence type="inferred from homology"/>
<protein>
    <recommendedName>
        <fullName>NADH-ubiquinone oxidoreductase chain 4</fullName>
        <ecNumber evidence="1">7.1.1.2</ecNumber>
    </recommendedName>
    <alternativeName>
        <fullName>NADH dehydrogenase subunit 4</fullName>
    </alternativeName>
</protein>
<feature type="chain" id="PRO_0000117952" description="NADH-ubiquinone oxidoreductase chain 4">
    <location>
        <begin position="1"/>
        <end position="459"/>
    </location>
</feature>
<feature type="transmembrane region" description="Helical" evidence="3">
    <location>
        <begin position="22"/>
        <end position="42"/>
    </location>
</feature>
<feature type="transmembrane region" description="Helical" evidence="3">
    <location>
        <begin position="60"/>
        <end position="80"/>
    </location>
</feature>
<feature type="transmembrane region" description="Helical" evidence="3">
    <location>
        <begin position="95"/>
        <end position="112"/>
    </location>
</feature>
<feature type="transmembrane region" description="Helical" evidence="3">
    <location>
        <begin position="114"/>
        <end position="134"/>
    </location>
</feature>
<feature type="transmembrane region" description="Helical" evidence="3">
    <location>
        <begin position="147"/>
        <end position="167"/>
    </location>
</feature>
<feature type="transmembrane region" description="Helical" evidence="3">
    <location>
        <begin position="194"/>
        <end position="214"/>
    </location>
</feature>
<feature type="transmembrane region" description="Helical" evidence="3">
    <location>
        <begin position="224"/>
        <end position="244"/>
    </location>
</feature>
<feature type="transmembrane region" description="Helical" evidence="3">
    <location>
        <begin position="257"/>
        <end position="277"/>
    </location>
</feature>
<feature type="transmembrane region" description="Helical" evidence="3">
    <location>
        <begin position="284"/>
        <end position="303"/>
    </location>
</feature>
<feature type="transmembrane region" description="Helical" evidence="3">
    <location>
        <begin position="308"/>
        <end position="330"/>
    </location>
</feature>
<feature type="transmembrane region" description="Helical" evidence="3">
    <location>
        <begin position="350"/>
        <end position="370"/>
    </location>
</feature>
<feature type="transmembrane region" description="Helical" evidence="3">
    <location>
        <begin position="375"/>
        <end position="395"/>
    </location>
</feature>
<feature type="transmembrane region" description="Helical" evidence="3">
    <location>
        <begin position="435"/>
        <end position="455"/>
    </location>
</feature>
<dbReference type="EC" id="7.1.1.2" evidence="1"/>
<dbReference type="EMBL" id="Y10524">
    <property type="protein sequence ID" value="CAA71545.1"/>
    <property type="molecule type" value="Genomic_DNA"/>
</dbReference>
<dbReference type="PIR" id="T11437">
    <property type="entry name" value="T11437"/>
</dbReference>
<dbReference type="RefSeq" id="NP_007403.1">
    <property type="nucleotide sequence ID" value="NC_001794.1"/>
</dbReference>
<dbReference type="SMR" id="P92668"/>
<dbReference type="GeneID" id="808074"/>
<dbReference type="CTD" id="4538"/>
<dbReference type="GO" id="GO:0005743">
    <property type="term" value="C:mitochondrial inner membrane"/>
    <property type="evidence" value="ECO:0000250"/>
    <property type="project" value="UniProtKB"/>
</dbReference>
<dbReference type="GO" id="GO:0008137">
    <property type="term" value="F:NADH dehydrogenase (ubiquinone) activity"/>
    <property type="evidence" value="ECO:0000250"/>
    <property type="project" value="UniProtKB"/>
</dbReference>
<dbReference type="GO" id="GO:0048039">
    <property type="term" value="F:ubiquinone binding"/>
    <property type="evidence" value="ECO:0007669"/>
    <property type="project" value="TreeGrafter"/>
</dbReference>
<dbReference type="GO" id="GO:0015990">
    <property type="term" value="P:electron transport coupled proton transport"/>
    <property type="evidence" value="ECO:0007669"/>
    <property type="project" value="TreeGrafter"/>
</dbReference>
<dbReference type="GO" id="GO:0006120">
    <property type="term" value="P:mitochondrial electron transport, NADH to ubiquinone"/>
    <property type="evidence" value="ECO:0000250"/>
    <property type="project" value="UniProtKB"/>
</dbReference>
<dbReference type="GO" id="GO:0032981">
    <property type="term" value="P:mitochondrial respiratory chain complex I assembly"/>
    <property type="evidence" value="ECO:0000250"/>
    <property type="project" value="UniProtKB"/>
</dbReference>
<dbReference type="InterPro" id="IPR000260">
    <property type="entry name" value="NADH4_N"/>
</dbReference>
<dbReference type="InterPro" id="IPR010227">
    <property type="entry name" value="NADH_Q_OxRdtase_chainM/4"/>
</dbReference>
<dbReference type="InterPro" id="IPR003918">
    <property type="entry name" value="NADH_UbQ_OxRdtase"/>
</dbReference>
<dbReference type="InterPro" id="IPR001750">
    <property type="entry name" value="ND/Mrp_TM"/>
</dbReference>
<dbReference type="NCBIfam" id="TIGR01972">
    <property type="entry name" value="NDH_I_M"/>
    <property type="match status" value="1"/>
</dbReference>
<dbReference type="PANTHER" id="PTHR43507">
    <property type="entry name" value="NADH-UBIQUINONE OXIDOREDUCTASE CHAIN 4"/>
    <property type="match status" value="1"/>
</dbReference>
<dbReference type="PANTHER" id="PTHR43507:SF20">
    <property type="entry name" value="NADH-UBIQUINONE OXIDOREDUCTASE CHAIN 4"/>
    <property type="match status" value="1"/>
</dbReference>
<dbReference type="Pfam" id="PF01059">
    <property type="entry name" value="Oxidored_q5_N"/>
    <property type="match status" value="1"/>
</dbReference>
<dbReference type="Pfam" id="PF00361">
    <property type="entry name" value="Proton_antipo_M"/>
    <property type="match status" value="1"/>
</dbReference>
<dbReference type="PRINTS" id="PR01437">
    <property type="entry name" value="NUOXDRDTASE4"/>
</dbReference>
<evidence type="ECO:0000250" key="1">
    <source>
        <dbReference type="UniProtKB" id="P03905"/>
    </source>
</evidence>
<evidence type="ECO:0000250" key="2">
    <source>
        <dbReference type="UniProtKB" id="P03910"/>
    </source>
</evidence>
<evidence type="ECO:0000255" key="3"/>
<evidence type="ECO:0000305" key="4"/>
<gene>
    <name type="primary">MT-ND4</name>
    <name type="synonym">MTND4</name>
    <name type="synonym">NADH4</name>
    <name type="synonym">ND4</name>
</gene>
<organism>
    <name type="scientific">Osphranter robustus</name>
    <name type="common">Wallaroo</name>
    <name type="synonym">Macropus robustus</name>
    <dbReference type="NCBI Taxonomy" id="9319"/>
    <lineage>
        <taxon>Eukaryota</taxon>
        <taxon>Metazoa</taxon>
        <taxon>Chordata</taxon>
        <taxon>Craniata</taxon>
        <taxon>Vertebrata</taxon>
        <taxon>Euteleostomi</taxon>
        <taxon>Mammalia</taxon>
        <taxon>Metatheria</taxon>
        <taxon>Diprotodontia</taxon>
        <taxon>Macropodidae</taxon>
        <taxon>Osphranter</taxon>
    </lineage>
</organism>
<name>NU4M_OSPRO</name>
<comment type="function">
    <text evidence="1">Core subunit of the mitochondrial membrane respiratory chain NADH dehydrogenase (Complex I) which catalyzes electron transfer from NADH through the respiratory chain, using ubiquinone as an electron acceptor. Essential for the catalytic activity and assembly of complex I.</text>
</comment>
<comment type="catalytic activity">
    <reaction evidence="1">
        <text>a ubiquinone + NADH + 5 H(+)(in) = a ubiquinol + NAD(+) + 4 H(+)(out)</text>
        <dbReference type="Rhea" id="RHEA:29091"/>
        <dbReference type="Rhea" id="RHEA-COMP:9565"/>
        <dbReference type="Rhea" id="RHEA-COMP:9566"/>
        <dbReference type="ChEBI" id="CHEBI:15378"/>
        <dbReference type="ChEBI" id="CHEBI:16389"/>
        <dbReference type="ChEBI" id="CHEBI:17976"/>
        <dbReference type="ChEBI" id="CHEBI:57540"/>
        <dbReference type="ChEBI" id="CHEBI:57945"/>
        <dbReference type="EC" id="7.1.1.2"/>
    </reaction>
</comment>
<comment type="subunit">
    <text evidence="2">Core subunit of respiratory chain NADH dehydrogenase (Complex I) which is composed of 45 different subunits.</text>
</comment>
<comment type="subcellular location">
    <subcellularLocation>
        <location evidence="2">Mitochondrion inner membrane</location>
        <topology evidence="3">Multi-pass membrane protein</topology>
    </subcellularLocation>
</comment>
<comment type="similarity">
    <text evidence="4">Belongs to the complex I subunit 4 family.</text>
</comment>
<sequence>MLKILVPTIMLIPLTWYSKKQWVWINPTAHSFLISIASLTLLYHSTDLGYSYSSSFYMDSLSGPLLVLSCWLLPLMMIASQNHLMKEPLNRKKTFLTTLIILQTSLIMAFSSSELIMFYIMFEATLIPTLIIITRWGNQNERLNAGLYFLFYTLTGSLPLLVALLYLHSKIGTLHILTLIMNPKPMELSMPNSILWYACTVAFMVKMPMYGLHLWLPKAHVEAPIAGSMVLAAILLKLGGYGIMRITILTQPITAHVYYPFIVLSLWGMIMTSSICLRQTDLKSLIAYSSVSHMGLVIVAALMQSTLSFMGATALMIAHGLTSSMLFCLANTNYERIHSRTMILARGLQLILPLMCTWWLLASLANLALPPTINLLGELAVIISSFSWSHFSIILLGANTVITALYSLHMLITSQRGKFTHHLYPMKPSFTREHILMMLHMIPLLIISMNPKFILGITY</sequence>
<keyword id="KW-0249">Electron transport</keyword>
<keyword id="KW-0472">Membrane</keyword>
<keyword id="KW-0496">Mitochondrion</keyword>
<keyword id="KW-0999">Mitochondrion inner membrane</keyword>
<keyword id="KW-0520">NAD</keyword>
<keyword id="KW-0679">Respiratory chain</keyword>
<keyword id="KW-1278">Translocase</keyword>
<keyword id="KW-0812">Transmembrane</keyword>
<keyword id="KW-1133">Transmembrane helix</keyword>
<keyword id="KW-0813">Transport</keyword>
<keyword id="KW-0830">Ubiquinone</keyword>